<gene>
    <name evidence="3" type="primary">CRE10</name>
    <name type="ORF">PITG_13452</name>
</gene>
<name>CRE10_PHYIT</name>
<keyword id="KW-1185">Reference proteome</keyword>
<keyword id="KW-0964">Secreted</keyword>
<keyword id="KW-0732">Signal</keyword>
<keyword id="KW-0843">Virulence</keyword>
<organism>
    <name type="scientific">Phytophthora infestans (strain T30-4)</name>
    <name type="common">Potato late blight agent</name>
    <dbReference type="NCBI Taxonomy" id="403677"/>
    <lineage>
        <taxon>Eukaryota</taxon>
        <taxon>Sar</taxon>
        <taxon>Stramenopiles</taxon>
        <taxon>Oomycota</taxon>
        <taxon>Peronosporales</taxon>
        <taxon>Peronosporaceae</taxon>
        <taxon>Phytophthora</taxon>
    </lineage>
</organism>
<proteinExistence type="evidence at transcript level"/>
<reference key="1">
    <citation type="journal article" date="2009" name="Nature">
        <title>Genome sequence and analysis of the Irish potato famine pathogen Phytophthora infestans.</title>
        <authorList>
            <consortium name="The Broad Institute Genome Sequencing Platform"/>
            <person name="Haas B.J."/>
            <person name="Kamoun S."/>
            <person name="Zody M.C."/>
            <person name="Jiang R.H."/>
            <person name="Handsaker R.E."/>
            <person name="Cano L.M."/>
            <person name="Grabherr M."/>
            <person name="Kodira C.D."/>
            <person name="Raffaele S."/>
            <person name="Torto-Alalibo T."/>
            <person name="Bozkurt T.O."/>
            <person name="Ah-Fong A.M."/>
            <person name="Alvarado L."/>
            <person name="Anderson V.L."/>
            <person name="Armstrong M.R."/>
            <person name="Avrova A."/>
            <person name="Baxter L."/>
            <person name="Beynon J."/>
            <person name="Boevink P.C."/>
            <person name="Bollmann S.R."/>
            <person name="Bos J.I."/>
            <person name="Bulone V."/>
            <person name="Cai G."/>
            <person name="Cakir C."/>
            <person name="Carrington J.C."/>
            <person name="Chawner M."/>
            <person name="Conti L."/>
            <person name="Costanzo S."/>
            <person name="Ewan R."/>
            <person name="Fahlgren N."/>
            <person name="Fischbach M.A."/>
            <person name="Fugelstad J."/>
            <person name="Gilroy E.M."/>
            <person name="Gnerre S."/>
            <person name="Green P.J."/>
            <person name="Grenville-Briggs L.J."/>
            <person name="Griffith J."/>
            <person name="Grunwald N.J."/>
            <person name="Horn K."/>
            <person name="Horner N.R."/>
            <person name="Hu C.H."/>
            <person name="Huitema E."/>
            <person name="Jeong D.H."/>
            <person name="Jones A.M."/>
            <person name="Jones J.D."/>
            <person name="Jones R.W."/>
            <person name="Karlsson E.K."/>
            <person name="Kunjeti S.G."/>
            <person name="Lamour K."/>
            <person name="Liu Z."/>
            <person name="Ma L."/>
            <person name="Maclean D."/>
            <person name="Chibucos M.C."/>
            <person name="McDonald H."/>
            <person name="McWalters J."/>
            <person name="Meijer H.J."/>
            <person name="Morgan W."/>
            <person name="Morris P.F."/>
            <person name="Munro C.A."/>
            <person name="O'Neill K."/>
            <person name="Ospina-Giraldo M."/>
            <person name="Pinzon A."/>
            <person name="Pritchard L."/>
            <person name="Ramsahoye B."/>
            <person name="Ren Q."/>
            <person name="Restrepo S."/>
            <person name="Roy S."/>
            <person name="Sadanandom A."/>
            <person name="Savidor A."/>
            <person name="Schornack S."/>
            <person name="Schwartz D.C."/>
            <person name="Schumann U.D."/>
            <person name="Schwessinger B."/>
            <person name="Seyer L."/>
            <person name="Sharpe T."/>
            <person name="Silvar C."/>
            <person name="Song J."/>
            <person name="Studholme D.J."/>
            <person name="Sykes S."/>
            <person name="Thines M."/>
            <person name="van de Vondervoort P.J."/>
            <person name="Phuntumart V."/>
            <person name="Wawra S."/>
            <person name="Weide R."/>
            <person name="Win J."/>
            <person name="Young C."/>
            <person name="Zhou S."/>
            <person name="Fry W."/>
            <person name="Meyers B.C."/>
            <person name="van West P."/>
            <person name="Ristaino J."/>
            <person name="Govers F."/>
            <person name="Birch P.R."/>
            <person name="Whisson S.C."/>
            <person name="Judelson H.S."/>
            <person name="Nusbaum C."/>
        </authorList>
    </citation>
    <scope>NUCLEOTIDE SEQUENCE [LARGE SCALE GENOMIC DNA]</scope>
    <source>
        <strain>T30-4</strain>
    </source>
</reference>
<reference key="2">
    <citation type="journal article" date="2017" name="Front. Plant Sci.">
        <title>Conserved RXLR effector genes of Phytophthora infestans expressed at the early stage of potato infection are suppressive to host defense.</title>
        <authorList>
            <person name="Yin J."/>
            <person name="Gu B."/>
            <person name="Huang G."/>
            <person name="Tian Y."/>
            <person name="Quan J."/>
            <person name="Lindqvist-Kreuze H."/>
            <person name="Shan W."/>
        </authorList>
    </citation>
    <scope>INDUCTION</scope>
    <scope>DOMAIN</scope>
    <scope>FUNCTION</scope>
</reference>
<comment type="function">
    <text evidence="2">Effector that is involved in host plant infection. Contributes to virulence during the early infection stage, by inhibiting plant defense responses induced by both PAMP-triggered immunity (PTI) and effector-triggered immunity (ETI).</text>
</comment>
<comment type="subcellular location">
    <subcellularLocation>
        <location evidence="5">Secreted</location>
    </subcellularLocation>
    <subcellularLocation>
        <location evidence="5">Host cell</location>
    </subcellularLocation>
</comment>
<comment type="induction">
    <text evidence="2">Expression is induced during host plant infection.</text>
</comment>
<comment type="domain">
    <text evidence="5">The RxLR-dEER motif acts to carry the protein into the host cell cytoplasm through binding to cell surface phosphatidylinositol-3-phosphate.</text>
</comment>
<comment type="similarity">
    <text evidence="4">Belongs to the RxLR effector family.</text>
</comment>
<feature type="signal peptide" evidence="1">
    <location>
        <begin position="1"/>
        <end position="21"/>
    </location>
</feature>
<feature type="chain" id="PRO_5003012623" description="RxLR effector protein CRE10">
    <location>
        <begin position="22"/>
        <end position="97"/>
    </location>
</feature>
<feature type="short sequence motif" description="RxLR-dEER" evidence="5">
    <location>
        <begin position="48"/>
        <end position="66"/>
    </location>
</feature>
<dbReference type="EMBL" id="DS028146">
    <property type="protein sequence ID" value="EEY60736.1"/>
    <property type="molecule type" value="Genomic_DNA"/>
</dbReference>
<dbReference type="RefSeq" id="XP_002899682.1">
    <property type="nucleotide sequence ID" value="XM_002899636.1"/>
</dbReference>
<dbReference type="STRING" id="403677.D0NM15"/>
<dbReference type="EnsemblProtists" id="PITG_13452T0">
    <property type="protein sequence ID" value="PITG_13452T0"/>
    <property type="gene ID" value="PITG_13452"/>
</dbReference>
<dbReference type="GeneID" id="9461886"/>
<dbReference type="KEGG" id="pif:PITG_13452"/>
<dbReference type="VEuPathDB" id="FungiDB:PITG_13452"/>
<dbReference type="eggNOG" id="ENOG502RH31">
    <property type="taxonomic scope" value="Eukaryota"/>
</dbReference>
<dbReference type="HOGENOM" id="CLU_2351196_0_0_1"/>
<dbReference type="InParanoid" id="D0NM15"/>
<dbReference type="OMA" id="QACVCAI"/>
<dbReference type="OrthoDB" id="97649at2759"/>
<dbReference type="Proteomes" id="UP000006643">
    <property type="component" value="Partially assembled WGS sequence"/>
</dbReference>
<dbReference type="GO" id="GO:0005576">
    <property type="term" value="C:extracellular region"/>
    <property type="evidence" value="ECO:0007669"/>
    <property type="project" value="UniProtKB-SubCell"/>
</dbReference>
<dbReference type="GO" id="GO:0043657">
    <property type="term" value="C:host cell"/>
    <property type="evidence" value="ECO:0007669"/>
    <property type="project" value="UniProtKB-SubCell"/>
</dbReference>
<dbReference type="InterPro" id="IPR031825">
    <property type="entry name" value="RXLR"/>
</dbReference>
<dbReference type="Pfam" id="PF16810">
    <property type="entry name" value="RXLR"/>
    <property type="match status" value="1"/>
</dbReference>
<evidence type="ECO:0000255" key="1"/>
<evidence type="ECO:0000269" key="2">
    <source>
    </source>
</evidence>
<evidence type="ECO:0000303" key="3">
    <source>
    </source>
</evidence>
<evidence type="ECO:0000305" key="4"/>
<evidence type="ECO:0000305" key="5">
    <source>
    </source>
</evidence>
<accession>D0NM15</accession>
<protein>
    <recommendedName>
        <fullName evidence="3">RxLR effector protein CRE10</fullName>
    </recommendedName>
    <alternativeName>
        <fullName evidence="3">Core RXLR effector 10</fullName>
    </alternativeName>
</protein>
<sequence length="97" mass="10903">MRLSYILVVVIAVTLQACVCAIPVIKEANQVMLANGPLPSIVNTEGGRLLRGVKKRTAEREVQEERMSGAKLSEKGKQFLKWFFRGSDTRVKGRSWR</sequence>